<protein>
    <recommendedName>
        <fullName evidence="8">tRNA nuclease CdiA</fullName>
        <shortName evidence="8">tRNase CdiA</shortName>
        <ecNumber evidence="5">3.1.-.-</ecNumber>
    </recommendedName>
    <alternativeName>
        <fullName evidence="7">Contact-dependent inhibitor A</fullName>
        <shortName evidence="8">CdiA-STECO31</shortName>
    </alternativeName>
    <alternativeName>
        <fullName>Toxin CdiA</fullName>
    </alternativeName>
</protein>
<organism>
    <name type="scientific">Escherichia coli (strain STEC_O31)</name>
    <dbReference type="NCBI Taxonomy" id="754081"/>
    <lineage>
        <taxon>Bacteria</taxon>
        <taxon>Pseudomonadati</taxon>
        <taxon>Pseudomonadota</taxon>
        <taxon>Gammaproteobacteria</taxon>
        <taxon>Enterobacterales</taxon>
        <taxon>Enterobacteriaceae</taxon>
        <taxon>Escherichia</taxon>
    </lineage>
</organism>
<comment type="function">
    <text evidence="4 5 10">Toxic component of a toxin-immunity protein module, which functions as a cellular contact-dependent growth inhibition (CDI) system. CDI modules allow bacteria to communicate with and inhibit the growth of closely related neighboring target bacteria in a contact-dependent fashion (target cell counts decrease 1000- to 10000-fold with this CDI) (PubMed:28351921, PubMed:29923643). Uses outer membrane nucleoside transporter Tsx on target cells as a receptor (PubMed:28351921). Gains access to the cytoplasm of target cells by using integral inner membrane protein PTS system glucose-specific EIICB component (ptsG) (Probable). Targeting of the C-terminal domain (CT) domain (residues 2931-3253) in the absence of immunity protein inhibits cell growth and causes tRNA(UUC-Glu) cleavage; expression of cognate immunity protein CdiI-STECO31 neutralizes growth inhibition leaving tRNA(UUC-Glu) is intact, whereas non-cognate immunity proteins do not confer protection (PubMed:29923643). The CT domain cleaves tRNA; it is most active against tRNA(UUC-Glu), but also has modest activity against tRNA(GUC-Asp), tRNA(UUG-Gln), tRNA(CCC-Gly), tRNA(UCC-Gly), tRNA(GCC-Gly), tRNA(UUU-Lys), tRNA(GGU-Thr) and tRNA(CCA-Trp); tRNA cleavage is inhibited by cognate immunity protein CdiI. Cleavage of tRNA(UUC-Glu) occurs in the anticodon loop between cytosine(37) and 2-methyladenosine(38) (C37-m2A38) and probably also occurs in the anticodon loop of other tRNAs as well (PubMed:29923643).</text>
</comment>
<comment type="function">
    <text evidence="11">The CdiA protein is thought to be exported from the cell through the central lumen of CdiB, the other half of its two-partner system (TPS). The TPS domain probably remains associated with CdiB while the FHA-1 domain forms an extended filament (33 nm long) with the receptor-binding domain (RBD) at its extremity; in the secretion arrested state the C-terminus of the RBD and YP domains form a hairpin-like structure as the FHA-2, PT and CT domains are periplasmic. The YP domain is probably responsible for this arrest at the point where it re-enters the host cell periplasm. Upon binding to a target cell outer membrane receptor (Tsx for this CDI) a signal is transmitted to activate secretion. The filament becomes about 5 nm longer, the rest of CdiA is secreted and the FHA-2 domain becomes stably associated with the target cell's outer membrane where it facilitates entry of the toxic CT domain into the target cell periplasm. From there the toxic CT domain is cleaved and gains access to the target cell cytoplasm via an inner membrane protein (PTS system glucose-specific EIICB component, ptsG for this CDI).</text>
</comment>
<comment type="cofactor">
    <text evidence="5">tRNase activity is metal-independent.</text>
</comment>
<comment type="subunit">
    <text evidence="5">Forms a 1:1 complex with cognate immunity protein CdiI-STECO31.</text>
</comment>
<comment type="subcellular location">
    <subcellularLocation>
        <location evidence="2">Secreted</location>
    </subcellularLocation>
    <subcellularLocation>
        <location evidence="11">Target cell</location>
        <location evidence="11">Target cell cytoplasm</location>
    </subcellularLocation>
    <text evidence="1 6">Secreted to the cell surface by CdiB, its two partner secretion pathway (TPS) partner (Probable). Toxin translocation into the target cell depends on the proton motive force of the target cell, but not on tolA or tonB (By similarity). Forms filaments that extend about 33 nm away from the host cell surface; multiple filaments can be found on a single cell (PubMed:30388452).</text>
</comment>
<comment type="domain">
    <text evidence="5 6">The FHA1 domain comprises the bulk of the extended filament, deletion of 100 internal residues (900-999) has a very small defect in CDI and target cell adhesion. The receptor binding domain (RBD) recognizes Tsx on target cells. The YP domain is required for stable presentation to the target cellmfac in liquid but not on solid growth media. The pFR and FHA-2 domains are critical for delivery of the CT to the target cell periplasm; deletions within these regions (1854-1954 and 2324-2423 respectively) lead to aberrant processing by target cell OmpT. FHA-2 is required for stable association with the target cell outer membrane. The PT domain is also required for CT delivery into target bacteria; it is transferred into the target cell and may be involved in autoproteolysis to release the CT domain (PubMed:30388452). The C-terminal effector domain (CT) has toxic, tRNase activity and binds to cognate immunity protein CdiI-STECO31 (PubMed:29923643).</text>
</comment>
<comment type="PTM">
    <text evidence="6">The CT domain is cleaved upon binding to receptor Tsx on target cells.</text>
</comment>
<comment type="similarity">
    <text evidence="9">In the N-terminal section; belongs to the CdiA toxin family.</text>
</comment>
<comment type="similarity">
    <text evidence="9">In the C-terminal section; belongs to the bacterial EndoU family.</text>
</comment>
<keyword id="KW-0002">3D-structure</keyword>
<keyword id="KW-0255">Endonuclease</keyword>
<keyword id="KW-0378">Hydrolase</keyword>
<keyword id="KW-0540">Nuclease</keyword>
<keyword id="KW-0964">Secreted</keyword>
<keyword id="KW-0732">Signal</keyword>
<keyword id="KW-1266">Target cell cytoplasm</keyword>
<keyword id="KW-0800">Toxin</keyword>
<keyword id="KW-0843">Virulence</keyword>
<feature type="signal peptide" evidence="7">
    <location>
        <begin position="1"/>
        <end position="32"/>
    </location>
</feature>
<feature type="chain" id="PRO_0000446869" description="tRNA nuclease CdiA">
    <location>
        <begin position="33"/>
        <end position="3253"/>
    </location>
</feature>
<feature type="region of interest" description="Two-partner system transport domain (TPS)" evidence="10">
    <location>
        <begin position="36"/>
        <end position="322"/>
    </location>
</feature>
<feature type="region of interest" description="FHA-1" evidence="10">
    <location>
        <begin position="351"/>
        <end position="1384"/>
    </location>
</feature>
<feature type="region of interest" description="Receptor binding domain (RBD)" evidence="10">
    <location>
        <begin position="1385"/>
        <end position="1656"/>
    </location>
</feature>
<feature type="region of interest" description="YP domain" evidence="11">
    <location>
        <begin position="1657"/>
        <end position="1841"/>
    </location>
</feature>
<feature type="region of interest" description="Periplasmic FHA-1 repeat (pFR)" evidence="10 11">
    <location>
        <begin position="1842"/>
        <end position="1902"/>
    </location>
</feature>
<feature type="region of interest" description="FHA-2" evidence="10">
    <location>
        <begin position="1944"/>
        <end position="2548"/>
    </location>
</feature>
<feature type="region of interest" description="Disordered" evidence="3">
    <location>
        <begin position="2228"/>
        <end position="2252"/>
    </location>
</feature>
<feature type="region of interest" description="Disordered" evidence="3">
    <location>
        <begin position="2362"/>
        <end position="2410"/>
    </location>
</feature>
<feature type="region of interest" description="Disordered" evidence="3">
    <location>
        <begin position="2483"/>
        <end position="2503"/>
    </location>
</feature>
<feature type="region of interest" description="Disordered" evidence="3">
    <location>
        <begin position="2687"/>
        <end position="2712"/>
    </location>
</feature>
<feature type="region of interest" description="Pretoxin (PT) domain" evidence="10">
    <location>
        <begin position="2888"/>
        <end position="2930"/>
    </location>
</feature>
<feature type="region of interest" description="C-terminal effector domain (CT)" evidence="8">
    <location>
        <begin position="2931"/>
        <end position="3253"/>
    </location>
</feature>
<feature type="short sequence motif" description="VDNN CT cleavage motif" evidence="11">
    <location>
        <begin position="2931"/>
        <end position="2934"/>
    </location>
</feature>
<feature type="compositionally biased region" description="Polar residues" evidence="3">
    <location>
        <begin position="2240"/>
        <end position="2252"/>
    </location>
</feature>
<feature type="compositionally biased region" description="Polar residues" evidence="3">
    <location>
        <begin position="2368"/>
        <end position="2403"/>
    </location>
</feature>
<feature type="compositionally biased region" description="Polar residues" evidence="3">
    <location>
        <begin position="2490"/>
        <end position="2503"/>
    </location>
</feature>
<feature type="mutagenesis site" description="Prevents cleavage of CT and thus CDI, no effect on target cell adhesion." evidence="6">
    <original>N</original>
    <variation>A</variation>
    <location>
        <position position="2934"/>
    </location>
</feature>
<feature type="mutagenesis site" description="Loss of growth inhibition, no tRNA cleavage by targeted CT domain, in vitro CT domain has very little tRNase activity." evidence="5">
    <original>H</original>
    <variation>A</variation>
    <location>
        <position position="3117"/>
    </location>
</feature>
<feature type="mutagenesis site" description="Loss of growth inhibition, no tRNA cleavage by targeted CT domain, in vitro CT domain has no tRNase activity." evidence="5">
    <original>H</original>
    <variation>A</variation>
    <location>
        <position position="3134"/>
    </location>
</feature>
<feature type="mutagenesis site" description="Loss of growth inhibition, partial tRNA cleavage by targeted CT domain, in vitro CT domain has very little tRNase activity." evidence="5">
    <original>K</original>
    <variation>A</variation>
    <location>
        <position position="3191"/>
    </location>
</feature>
<feature type="mutagenesis site" description="Loss of growth inhibition, partial tRNA cleavage by targeted CT domain, in vitro CT domain has little tRNase activity." evidence="5">
    <original>T</original>
    <variation>A</variation>
    <location>
        <position position="3192"/>
    </location>
</feature>
<feature type="mutagenesis site" description="Retains growth inhibition and tRNA cleavage by isolated CT domain, in vitro CT domain has nearly wild-type tRNase activity." evidence="5">
    <original>N</original>
    <variation>A</variation>
    <location>
        <position position="3249"/>
    </location>
</feature>
<feature type="mutagenesis site" description="Loss of growth inhibition, partial tRNA cleavage by targeted CT domain, in vitro CT domain has very little tRNase activity." evidence="5">
    <original>H</original>
    <variation>A</variation>
    <location>
        <position position="3251"/>
    </location>
</feature>
<feature type="strand" evidence="13">
    <location>
        <begin position="3118"/>
        <end position="3125"/>
    </location>
</feature>
<feature type="turn" evidence="13">
    <location>
        <begin position="3126"/>
        <end position="3128"/>
    </location>
</feature>
<feature type="strand" evidence="13">
    <location>
        <begin position="3129"/>
        <end position="3132"/>
    </location>
</feature>
<feature type="helix" evidence="13">
    <location>
        <begin position="3136"/>
        <end position="3145"/>
    </location>
</feature>
<feature type="strand" evidence="13">
    <location>
        <begin position="3149"/>
        <end position="3155"/>
    </location>
</feature>
<feature type="strand" evidence="13">
    <location>
        <begin position="3161"/>
        <end position="3171"/>
    </location>
</feature>
<feature type="strand" evidence="13">
    <location>
        <begin position="3177"/>
        <end position="3184"/>
    </location>
</feature>
<feature type="strand" evidence="13">
    <location>
        <begin position="3189"/>
        <end position="3194"/>
    </location>
</feature>
<feature type="turn" evidence="13">
    <location>
        <begin position="3196"/>
        <end position="3198"/>
    </location>
</feature>
<feature type="helix" evidence="13">
    <location>
        <begin position="3201"/>
        <end position="3222"/>
    </location>
</feature>
<feature type="strand" evidence="13">
    <location>
        <begin position="3225"/>
        <end position="3231"/>
    </location>
</feature>
<feature type="strand" evidence="13">
    <location>
        <begin position="3234"/>
        <end position="3241"/>
    </location>
</feature>
<feature type="turn" evidence="13">
    <location>
        <begin position="3242"/>
        <end position="3245"/>
    </location>
</feature>
<feature type="strand" evidence="13">
    <location>
        <begin position="3246"/>
        <end position="3252"/>
    </location>
</feature>
<sequence length="3253" mass="332547">MHQPPVRFPYRLLSYLISTIIAGQPLLPAVGAVITPQNGAGMDKAANGVPVVNIATPNGAGISHNRFTDYNVGKEGLILNNATGKLNPTQLGGLIQNNPNLKAGGEAKGIINEVTGGNRSLLQGYTEVAGKAANVMVANPYGITCDGCGFINTPRATLTTGRPVMNADGSLQALEVTEGSITINGAGLDGTRSDAVSIIARATEVNAALHAKDLTVTAGANRVTADGRVSALKGEGDVPKVAVDTGALGGMYARRIHLTSTESGVGVNLGNLYAREGDIILSSSGKLVLKNSLAGGNTTVTGTDVSLSGDNKAGGNLSVTGTTGLTLNQSRLVTDKNLVLSSSGQIVQNGGELTAGQNAMLSAQHLNQTSGAVNAAENVTLTTTGGITLKGRSVAGKTLTVSSGSLNNGGTLGAGRDATVKTGTFSNTGAVQGNGLKVTATDLTSTGSIKSGSTLDISARNATLSGDAGAKDSARVTVSGTLENRGRLVSDDVLTLSATQINNSGTLSGAKELVASADTLTTTEKSVTNSDGNLMLNSASSTLAGETSAGGTVSVKGNSLKTTTTAQTQGNSVSVDVQNAQLDGTQAARDILTLNASEKLTHSGKSSAPSLSLSAPELTSSGVLVASALNTQSQTLTNSGLLQGEASLTVNTQRLDNQQNGTLYSAADLTLDIPDIRNSGLITGDNGLTLNTASLSNPGKITADTLNVRATTLDGDGLLQGAAALALAGDTLSQGSHGRWLTAGDLSLRGKTLNTAGTTQGQNLTVQADRWANSGSVLATGNLTASATGQLTSTGDIMSQGDTTLNAATTDNRGSLLSAGTLSLDGNSLDNSGTVQGNHVTLHHRSTDNSGTVTGLSGLTLHSADGLTNSGALLSQNSLVLSAGDVTNSGRIQGQNITLDASSLTSSGAVQSALDLALTLSGDVIAATGSKITALGDARLTGKVLGNQGLISAKTLEVNGDSLSNSGEISGVNSLNVTLSGNLQQHGKMLTGGALNVNARDISNSGQLQGADNRITASSLANSGRVQGESGLTLTLLNALTNQTSGVLLSQNVSALSAPVLTNDGTIQGNGKTTLSAATQAHNSGKILSGGELTFTTPDYSGSGWLQATDLLLNVAKLAGNGTVMAANQATLTGNSLTNRGLFQAAQLNVNTQTITNSGTLLGNQGLTIKGNNLNNAGGKVFSGGDMLAEMVSLSGAGQLVALGNLTLKLTRGLTAQGVIAANKQLSVSSQGDITNGATLQGNGITLNAAGRLTNNGQLTAGNGTTALSGSGIAMNASGSLQAGGDVSLTSRGDITLDAFTGTTGSLMLTAAGAVINTALLYAGNNLSLFASTIRNHHGDMLAGDSLVMQKDVSGAANAEVINTSGNIETTRGDITIRTGHLLNQREGINETKSYIPVENVAVPDGANSVSVRVGDLGEDGWGYYVKSWSGTAGGGFDAWAVPTEKGATRKFLTGTTRVDVGATGGDARISAGNNLLIDADKLDNTGSHLLASGFVSLSGSQLNNQSFFGYTQDEYNVYRYYGKLAMIPNDGHLQYGDASADDRVTFTLSGAPEYVTRDTGQALRAVIQAGKNVTAVFSSDISNTSTTSNAGRITNTLAAPEINTPAEKNISPRMAQLAPDGTEMLTVTAPDWTDTITRLTIGSGTDLASGIVEGNYPLPSGNNGYFVPSADPDSPYLITVNPKLDGLGKVDSSLFAGLYDLLRMHPGQAPRETDPAYTDEKQFPGSSYFLDRLGLKPEKDYRFLGDAAFDTRYVSNYMLNQIGGRYINGVGSDTDQMRYLMDNAARAQKALGLKFGVALTADQVAALDQSILWYKAVTIKGQTVMVPEVYLSPKDVTLQNGSIISGQNVHLAGGNVTNSGSTLMAQNNLTIDSADSLGNLESGLINAGGALGLKAMGDINNISATITGKTVRLESLAGNVNNLTRYSHWQLDAPEDSLALKHTYTGSIASVSAMDSLDIRADKNISVTGAEISAGDRAALIAGNDLSLNAIDRVSSRRHANSESHQRSAGLTTITAGDSVMLSAGRDVSSQGAGIAAEDNITVRAGRDVNLLAEESVTGSSSYSKKKTVIDETVRQQGAEIASGGDTTITAGRDITAVASSVTATGNISVNAGRDVALTTATESDYHYLETKKKSGGFLSKKTTHTISENSATREAGALLSGNRVTVNAGDNLTVQGSDVVADRDVSLAAGNHVDVLAATSTDTSWRFKETKKSGLMGTGGIGFTIGSSKTTHDRREAGTTQSQSASTIGSTAGNVSITAGKQAHISGSDVIANRDISITGDSVVVDPGHDRRTVDEKFEQKKSGLTVALSGTVGSAINNAVTSAQETKESSDSRLKALQATKTALSGVQAGQAAAMATATGDPNATGVSLSLTTQKSKSQQHSESDTVSGSTLNAGNNLSVVATGKNRGDNRGDIVIAGSQLKAGGNTSLDAANDILLSGAANTQKTTGRNSSSGGGVGVSIGAGKGAGISVFASVNAAKGSEKGNGTEWTETTTDSGKTVTINSGRDTVLNGAQVNGNRIIADVGHDLLISSQQDTSKYDSKQTSVAAGGSFTFGSMTGSGYIAASRDKMKSRFDSVAEQTGMFAGDGGFDITVGRHTQLDGAVIASTATPDKNHLDTGTLGFSDLHNEADYKVSHSGISLSGGGSFGDKFQGNMPGGMISAGGHSGHAEGTTQAAVAEGTITIRDRDNQKQNPADLSRDPAHANDSISPIFDKEKEQRRLQTVGLISDIGSQVADIARTQGELNALKAAKEATGETLPANATEKQRQEYLAKLRDTPEYKKEQEKYGTGSEIQLGIQAATAALQGLAGGNLAGALAGASAPELAHLLKSTEKDPAVNAIAHAILGGAVAAMQGNNVAAGAAGAATGELAARAIAGMLYPGVKQSDLSEEQKQTISTLATVSAGLAGGLTGNSSASAAVGAQSGKNAVDNNYLSVSEKTELEIAKQTLKNSKNPAEREKAQQKYDALLEKDIASDKEVIAACGNGNAGSSACASARLKVIASKEGYEDGPYNSKYSQQYADAYGQIVNLLDITSVDVQNQQQVKDAMVSYFMATLGVDQKTAQGYVETTQGLEIAAASMTPLFGQAVANKITALVDKANKYPSGIGFKINQPEHLAQLDGYSQKKGISGAHNADVFNKAVVDNGVKIISETPTGVRGITQVQYEIPTKDAAGNTTGNYKGNGAKPFEKTIYDPKIFTDEKMLQLGQEAAAIGYSNAIKNGLQAYDAKAGGVTFRVYIDQKTGIVSNFHPK</sequence>
<gene>
    <name evidence="7" type="primary">cdiA</name>
    <name type="synonym">ECSTECO31_4009</name>
</gene>
<dbReference type="EC" id="3.1.-.-" evidence="5"/>
<dbReference type="EMBL" id="AFEX01000038">
    <property type="protein sequence ID" value="EJK94116.1"/>
    <property type="molecule type" value="Genomic_DNA"/>
</dbReference>
<dbReference type="RefSeq" id="WP_001385946.1">
    <property type="nucleotide sequence ID" value="NZ_AFEX01000038.1"/>
</dbReference>
<dbReference type="PDB" id="5HKQ">
    <property type="method" value="X-ray"/>
    <property type="resolution" value="2.00 A"/>
    <property type="chains" value="A=3111-3253"/>
</dbReference>
<dbReference type="PDBsum" id="5HKQ"/>
<dbReference type="SMR" id="A0A1S4NYE3"/>
<dbReference type="GO" id="GO:0005576">
    <property type="term" value="C:extracellular region"/>
    <property type="evidence" value="ECO:0007669"/>
    <property type="project" value="UniProtKB-SubCell"/>
</dbReference>
<dbReference type="GO" id="GO:0004519">
    <property type="term" value="F:endonuclease activity"/>
    <property type="evidence" value="ECO:0007669"/>
    <property type="project" value="UniProtKB-KW"/>
</dbReference>
<dbReference type="GO" id="GO:0090729">
    <property type="term" value="F:toxin activity"/>
    <property type="evidence" value="ECO:0007669"/>
    <property type="project" value="UniProtKB-KW"/>
</dbReference>
<dbReference type="CDD" id="cd20686">
    <property type="entry name" value="CdiA-CT_Ec-like"/>
    <property type="match status" value="1"/>
</dbReference>
<dbReference type="FunFam" id="2.160.20.10:FF:000048">
    <property type="entry name" value="tRNA nuclease CdiA"/>
    <property type="match status" value="1"/>
</dbReference>
<dbReference type="Gene3D" id="2.160.20.10">
    <property type="entry name" value="Single-stranded right-handed beta-helix, Pectin lyase-like"/>
    <property type="match status" value="1"/>
</dbReference>
<dbReference type="InterPro" id="IPR010069">
    <property type="entry name" value="CdiA_FHA1_rpt"/>
</dbReference>
<dbReference type="InterPro" id="IPR049271">
    <property type="entry name" value="DUF6862"/>
</dbReference>
<dbReference type="InterPro" id="IPR008638">
    <property type="entry name" value="FhaB/CdiA-like_TPS"/>
</dbReference>
<dbReference type="InterPro" id="IPR025157">
    <property type="entry name" value="Hemagglutinin_rpt"/>
</dbReference>
<dbReference type="InterPro" id="IPR012334">
    <property type="entry name" value="Pectin_lyas_fold"/>
</dbReference>
<dbReference type="InterPro" id="IPR011050">
    <property type="entry name" value="Pectin_lyase_fold/virulence"/>
</dbReference>
<dbReference type="InterPro" id="IPR006914">
    <property type="entry name" value="VENN_dom"/>
</dbReference>
<dbReference type="NCBIfam" id="TIGR01901">
    <property type="entry name" value="adhes_NPXG"/>
    <property type="match status" value="1"/>
</dbReference>
<dbReference type="NCBIfam" id="TIGR01731">
    <property type="entry name" value="fil_hemag_20aa"/>
    <property type="match status" value="19"/>
</dbReference>
<dbReference type="Pfam" id="PF21726">
    <property type="entry name" value="DUF6862"/>
    <property type="match status" value="1"/>
</dbReference>
<dbReference type="Pfam" id="PF13332">
    <property type="entry name" value="Fil_haemagg_2"/>
    <property type="match status" value="3"/>
</dbReference>
<dbReference type="Pfam" id="PF04829">
    <property type="entry name" value="PT-VENN"/>
    <property type="match status" value="1"/>
</dbReference>
<dbReference type="Pfam" id="PF05860">
    <property type="entry name" value="TPS"/>
    <property type="match status" value="1"/>
</dbReference>
<dbReference type="SMART" id="SM00912">
    <property type="entry name" value="Haemagg_act"/>
    <property type="match status" value="1"/>
</dbReference>
<dbReference type="SUPFAM" id="SSF51126">
    <property type="entry name" value="Pectin lyase-like"/>
    <property type="match status" value="1"/>
</dbReference>
<reference key="1">
    <citation type="submission" date="2012-07" db="EMBL/GenBank/DDBJ databases">
        <authorList>
            <person name="Rasko D."/>
            <person name="Redman J."/>
            <person name="Daugherty S.C."/>
            <person name="Tallon L."/>
            <person name="Sadzewicz L."/>
            <person name="Jones K."/>
            <person name="Santana-Cruz I."/>
            <person name="Liu X."/>
        </authorList>
    </citation>
    <scope>NUCLEOTIDE SEQUENCE [LARGE SCALE GENOMIC DNA]</scope>
    <source>
        <strain>STEC_O31</strain>
    </source>
</reference>
<reference key="2">
    <citation type="journal article" date="2017" name="MBio">
        <title>CdiA effectors use modular receptor-binding domains to recognize target bacteria.</title>
        <authorList>
            <person name="Ruhe Z.C."/>
            <person name="Nguyen J.Y."/>
            <person name="Xiong J."/>
            <person name="Koskiniemi S."/>
            <person name="Beck C.M."/>
            <person name="Perkins B.R."/>
            <person name="Low D.A."/>
            <person name="Hayes C.S."/>
        </authorList>
    </citation>
    <scope>FUNCTION</scope>
    <scope>IDENTIFICATION OF RECEPTORS</scope>
    <scope>DOMAIN</scope>
    <source>
        <strain>EPI100</strain>
        <strain>STEC_O31</strain>
    </source>
</reference>
<reference key="3">
    <citation type="journal article" date="2018" name="Cell">
        <title>Programmed secretion arrest and receptor-triggered toxin export during antibacterial contact-dependent growth inhibition.</title>
        <authorList>
            <person name="Ruhe Z.C."/>
            <person name="Subramanian P."/>
            <person name="Song K."/>
            <person name="Nguyen J.Y."/>
            <person name="Stevens T.A."/>
            <person name="Low D.A."/>
            <person name="Jensen G.J."/>
            <person name="Hayes C.S."/>
        </authorList>
    </citation>
    <scope>FUNCTION</scope>
    <scope>SUBCELLULAR LOCATION</scope>
    <scope>DOMAIN</scope>
    <scope>TOPOLOGY</scope>
    <scope>MUTAGENESIS OF ASN-2934</scope>
    <source>
        <strain>STEC_O31</strain>
    </source>
</reference>
<reference evidence="12" key="4">
    <citation type="journal article" date="2018" name="Mol. Microbiol.">
        <title>Functional plasticity of antibacterial EndoU toxins.</title>
        <authorList>
            <person name="Michalska K."/>
            <person name="Quan Nhan D."/>
            <person name="Willett J.L.E."/>
            <person name="Stols L.M."/>
            <person name="Eschenfeldt W.H."/>
            <person name="Jones A.M."/>
            <person name="Nguyen J.Y."/>
            <person name="Koskiniemi S."/>
            <person name="Low D.A."/>
            <person name="Goulding C.W."/>
            <person name="Joachimiak A."/>
            <person name="Hayes C.S."/>
        </authorList>
    </citation>
    <scope>X-RAY CRYSTALLOGRAPHY (2.00 ANGSTROMS) OF 3111-3253 IN COMPLEX WITH CDII</scope>
    <scope>FUNCTION</scope>
    <scope>LACK OF COFACTOR</scope>
    <scope>SUBUNIT</scope>
    <scope>DOMAIN</scope>
    <scope>MUTAGENESIS OF HIS-3117; HIS-3134; LYS-3191; THR-3192; ASN-3249 AND HIS-3251</scope>
    <source>
        <strain>STEC_O31</strain>
    </source>
</reference>
<evidence type="ECO:0000250" key="1">
    <source>
        <dbReference type="UniProtKB" id="Q3YL96"/>
    </source>
</evidence>
<evidence type="ECO:0000255" key="2"/>
<evidence type="ECO:0000256" key="3">
    <source>
        <dbReference type="SAM" id="MobiDB-lite"/>
    </source>
</evidence>
<evidence type="ECO:0000269" key="4">
    <source>
    </source>
</evidence>
<evidence type="ECO:0000269" key="5">
    <source>
    </source>
</evidence>
<evidence type="ECO:0000269" key="6">
    <source>
    </source>
</evidence>
<evidence type="ECO:0000303" key="7">
    <source>
    </source>
</evidence>
<evidence type="ECO:0000303" key="8">
    <source>
    </source>
</evidence>
<evidence type="ECO:0000305" key="9"/>
<evidence type="ECO:0000305" key="10">
    <source>
    </source>
</evidence>
<evidence type="ECO:0000305" key="11">
    <source>
    </source>
</evidence>
<evidence type="ECO:0000312" key="12">
    <source>
        <dbReference type="PDB" id="5HKQ"/>
    </source>
</evidence>
<evidence type="ECO:0007829" key="13">
    <source>
        <dbReference type="PDB" id="5HKQ"/>
    </source>
</evidence>
<accession>A0A1S4NYE3</accession>
<name>CDIA_ECOST</name>
<proteinExistence type="evidence at protein level"/>